<organism>
    <name type="scientific">Synechococcus elongatus</name>
    <dbReference type="NCBI Taxonomy" id="32046"/>
    <lineage>
        <taxon>Bacteria</taxon>
        <taxon>Bacillati</taxon>
        <taxon>Cyanobacteriota</taxon>
        <taxon>Cyanophyceae</taxon>
        <taxon>Synechococcales</taxon>
        <taxon>Synechococcaceae</taxon>
        <taxon>Synechococcus</taxon>
    </lineage>
</organism>
<sequence>MAKVLKKPDLTNPALRAKLKKGMGHNYYGEPAWPNDLLYIFPVVIMGTIALVIGLAVMDPAMVGEPADPFATPLEILPEWYLYPTFQIFRVVPNKLLGVLMNASIPLGLMLIPFIESVNKFQNPFRRPVAMTVFLFGTLVTLWLGIGAAFPLDKSLTLGLF</sequence>
<feature type="chain" id="PRO_0000061908" description="Cytochrome b6-f complex subunit 4">
    <location>
        <begin position="1"/>
        <end position="161"/>
    </location>
</feature>
<feature type="transmembrane region" description="Helical" evidence="1">
    <location>
        <begin position="37"/>
        <end position="57"/>
    </location>
</feature>
<feature type="transmembrane region" description="Helical" evidence="1">
    <location>
        <begin position="96"/>
        <end position="116"/>
    </location>
</feature>
<feature type="transmembrane region" description="Helical" evidence="1">
    <location>
        <begin position="130"/>
        <end position="150"/>
    </location>
</feature>
<name>PETD_SYNEL</name>
<evidence type="ECO:0000255" key="1">
    <source>
        <dbReference type="HAMAP-Rule" id="MF_01344"/>
    </source>
</evidence>
<gene>
    <name evidence="1" type="primary">petD</name>
</gene>
<comment type="function">
    <text evidence="1">Component of the cytochrome b6-f complex, which mediates electron transfer between photosystem II (PSII) and photosystem I (PSI), cyclic electron flow around PSI, and state transitions.</text>
</comment>
<comment type="subunit">
    <text evidence="1">The 4 large subunits of the cytochrome b6-f complex are cytochrome b6, subunit IV (17 kDa polypeptide, PetD), cytochrome f and the Rieske protein, while the 4 small subunits are PetG, PetL, PetM and PetN. The complex functions as a dimer.</text>
</comment>
<comment type="subcellular location">
    <subcellularLocation>
        <location evidence="1">Cellular thylakoid membrane</location>
        <topology evidence="1">Multi-pass membrane protein</topology>
    </subcellularLocation>
</comment>
<comment type="similarity">
    <text evidence="1">Belongs to the cytochrome b family. PetD subfamily.</text>
</comment>
<proteinExistence type="inferred from homology"/>
<dbReference type="EMBL" id="AJ243707">
    <property type="protein sequence ID" value="CAB46750.1"/>
    <property type="molecule type" value="Genomic_DNA"/>
</dbReference>
<dbReference type="SMR" id="P0C8N2"/>
<dbReference type="GO" id="GO:0031676">
    <property type="term" value="C:plasma membrane-derived thylakoid membrane"/>
    <property type="evidence" value="ECO:0007669"/>
    <property type="project" value="UniProtKB-SubCell"/>
</dbReference>
<dbReference type="GO" id="GO:0045158">
    <property type="term" value="F:electron transporter, transferring electrons within cytochrome b6/f complex of photosystem II activity"/>
    <property type="evidence" value="ECO:0007669"/>
    <property type="project" value="UniProtKB-UniRule"/>
</dbReference>
<dbReference type="GO" id="GO:0045156">
    <property type="term" value="F:electron transporter, transferring electrons within the cyclic electron transport pathway of photosynthesis activity"/>
    <property type="evidence" value="ECO:0007669"/>
    <property type="project" value="InterPro"/>
</dbReference>
<dbReference type="GO" id="GO:0016491">
    <property type="term" value="F:oxidoreductase activity"/>
    <property type="evidence" value="ECO:0007669"/>
    <property type="project" value="InterPro"/>
</dbReference>
<dbReference type="GO" id="GO:0009767">
    <property type="term" value="P:photosynthetic electron transport chain"/>
    <property type="evidence" value="ECO:0007669"/>
    <property type="project" value="InterPro"/>
</dbReference>
<dbReference type="CDD" id="cd00290">
    <property type="entry name" value="cytochrome_b_C"/>
    <property type="match status" value="1"/>
</dbReference>
<dbReference type="FunFam" id="1.10.287.980:FF:000001">
    <property type="entry name" value="Cytochrome b6-f complex subunit 4"/>
    <property type="match status" value="1"/>
</dbReference>
<dbReference type="FunFam" id="1.20.5.510:FF:000002">
    <property type="entry name" value="Cytochrome b6-f complex subunit 4"/>
    <property type="match status" value="1"/>
</dbReference>
<dbReference type="Gene3D" id="1.10.287.980">
    <property type="entry name" value="plastocyanin oxidoreductase"/>
    <property type="match status" value="1"/>
</dbReference>
<dbReference type="Gene3D" id="1.20.5.510">
    <property type="entry name" value="Single helix bin"/>
    <property type="match status" value="1"/>
</dbReference>
<dbReference type="HAMAP" id="MF_01344">
    <property type="entry name" value="Cytb6_f_subIV"/>
    <property type="match status" value="1"/>
</dbReference>
<dbReference type="InterPro" id="IPR005798">
    <property type="entry name" value="Cyt_b/b6_C"/>
</dbReference>
<dbReference type="InterPro" id="IPR036150">
    <property type="entry name" value="Cyt_b/b6_C_sf"/>
</dbReference>
<dbReference type="InterPro" id="IPR005870">
    <property type="entry name" value="Cyt_b6/f_cplx_suIV"/>
</dbReference>
<dbReference type="InterPro" id="IPR048260">
    <property type="entry name" value="Cytochrome_b_C_euk/bac"/>
</dbReference>
<dbReference type="NCBIfam" id="TIGR01156">
    <property type="entry name" value="cytb6_f_IV"/>
    <property type="match status" value="1"/>
</dbReference>
<dbReference type="PANTHER" id="PTHR19271">
    <property type="entry name" value="CYTOCHROME B"/>
    <property type="match status" value="1"/>
</dbReference>
<dbReference type="PANTHER" id="PTHR19271:SF40">
    <property type="entry name" value="CYTOCHROME B"/>
    <property type="match status" value="1"/>
</dbReference>
<dbReference type="Pfam" id="PF00032">
    <property type="entry name" value="Cytochrom_B_C"/>
    <property type="match status" value="1"/>
</dbReference>
<dbReference type="PIRSF" id="PIRSF000033">
    <property type="entry name" value="B6f_17K"/>
    <property type="match status" value="1"/>
</dbReference>
<dbReference type="SUPFAM" id="SSF81648">
    <property type="entry name" value="a domain/subunit of cytochrome bc1 complex (Ubiquinol-cytochrome c reductase)"/>
    <property type="match status" value="1"/>
</dbReference>
<dbReference type="PROSITE" id="PS51003">
    <property type="entry name" value="CYTB_CTER"/>
    <property type="match status" value="1"/>
</dbReference>
<protein>
    <recommendedName>
        <fullName evidence="1">Cytochrome b6-f complex subunit 4</fullName>
    </recommendedName>
    <alternativeName>
        <fullName evidence="1">17 kDa polypeptide</fullName>
    </alternativeName>
</protein>
<keyword id="KW-0249">Electron transport</keyword>
<keyword id="KW-0472">Membrane</keyword>
<keyword id="KW-0602">Photosynthesis</keyword>
<keyword id="KW-0793">Thylakoid</keyword>
<keyword id="KW-0812">Transmembrane</keyword>
<keyword id="KW-1133">Transmembrane helix</keyword>
<keyword id="KW-0813">Transport</keyword>
<accession>P0C8N2</accession>
<accession>Q79V52</accession>
<accession>Q9X9S8</accession>
<reference key="1">
    <citation type="journal article" date="2000" name="Biochim. Biophys. Acta">
        <title>Sequence of the two operons encoding the four core subunits of the cytochrome b6f complex from the thermophilic cyanobacterium Synechococcus elongatus.</title>
        <authorList>
            <person name="Schneider D."/>
            <person name="Altenfeld U."/>
            <person name="Thomas H."/>
            <person name="Schrader S."/>
            <person name="Muehlenhoff U."/>
            <person name="Roegner M."/>
        </authorList>
    </citation>
    <scope>NUCLEOTIDE SEQUENCE [GENOMIC DNA]</scope>
</reference>